<evidence type="ECO:0000255" key="1">
    <source>
        <dbReference type="HAMAP-Rule" id="MF_00046"/>
    </source>
</evidence>
<gene>
    <name evidence="1" type="primary">murC</name>
    <name type="ordered locus">MXAN_5603</name>
</gene>
<accession>Q1D0T1</accession>
<sequence length="472" mass="51743">MTRNKPPSLFKTRHAAQVHFVGLGGIGMSGIAEVLLNLGYRVSGSDLRESDITRRLVRMGATFFEGHRAQNLIQADVVVISSAVRKDNPEVVAARQRKIPVIPRAEMLAELMRLKYAVAVAGSHGKTTTTSMVATVLSAAGLDPTAVVGGKVNVLDSNAKLGKSELMVVEADESDGSFLHLHPSIAIVTNIDPEHMDHYGDLDTLQSAFVEFCNRVPFYGLNVLCLDNPNVQALLPRIEKRFVTYGSSHMADYRLENIQLDGFTTRFNAYRREESLGEFRVRMVGAHNAFNALAVIAVAEEMDIPLETVRESLAEFGGVQRRFTVRGEAQGITVVDDYGHHPTEVLATLAGARRAFGRRVVVAFQPHRYTRTHDLMKEFTTSFNDSDVLFVTSVYAAGEERIHGATGDALADAVRAHGHRDVTFVEKRTDLPAALLPRLREGDLVLTLGAGDITHVGPELLELLRTTPLAKD</sequence>
<proteinExistence type="inferred from homology"/>
<reference key="1">
    <citation type="journal article" date="2006" name="Proc. Natl. Acad. Sci. U.S.A.">
        <title>Evolution of sensory complexity recorded in a myxobacterial genome.</title>
        <authorList>
            <person name="Goldman B.S."/>
            <person name="Nierman W.C."/>
            <person name="Kaiser D."/>
            <person name="Slater S.C."/>
            <person name="Durkin A.S."/>
            <person name="Eisen J.A."/>
            <person name="Ronning C.M."/>
            <person name="Barbazuk W.B."/>
            <person name="Blanchard M."/>
            <person name="Field C."/>
            <person name="Halling C."/>
            <person name="Hinkle G."/>
            <person name="Iartchuk O."/>
            <person name="Kim H.S."/>
            <person name="Mackenzie C."/>
            <person name="Madupu R."/>
            <person name="Miller N."/>
            <person name="Shvartsbeyn A."/>
            <person name="Sullivan S.A."/>
            <person name="Vaudin M."/>
            <person name="Wiegand R."/>
            <person name="Kaplan H.B."/>
        </authorList>
    </citation>
    <scope>NUCLEOTIDE SEQUENCE [LARGE SCALE GENOMIC DNA]</scope>
    <source>
        <strain>DK1622</strain>
    </source>
</reference>
<feature type="chain" id="PRO_0000336846" description="UDP-N-acetylmuramate--L-alanine ligase">
    <location>
        <begin position="1"/>
        <end position="472"/>
    </location>
</feature>
<feature type="binding site" evidence="1">
    <location>
        <begin position="122"/>
        <end position="128"/>
    </location>
    <ligand>
        <name>ATP</name>
        <dbReference type="ChEBI" id="CHEBI:30616"/>
    </ligand>
</feature>
<keyword id="KW-0067">ATP-binding</keyword>
<keyword id="KW-0131">Cell cycle</keyword>
<keyword id="KW-0132">Cell division</keyword>
<keyword id="KW-0133">Cell shape</keyword>
<keyword id="KW-0961">Cell wall biogenesis/degradation</keyword>
<keyword id="KW-0963">Cytoplasm</keyword>
<keyword id="KW-0436">Ligase</keyword>
<keyword id="KW-0547">Nucleotide-binding</keyword>
<keyword id="KW-0573">Peptidoglycan synthesis</keyword>
<keyword id="KW-1185">Reference proteome</keyword>
<comment type="function">
    <text evidence="1">Cell wall formation.</text>
</comment>
<comment type="catalytic activity">
    <reaction evidence="1">
        <text>UDP-N-acetyl-alpha-D-muramate + L-alanine + ATP = UDP-N-acetyl-alpha-D-muramoyl-L-alanine + ADP + phosphate + H(+)</text>
        <dbReference type="Rhea" id="RHEA:23372"/>
        <dbReference type="ChEBI" id="CHEBI:15378"/>
        <dbReference type="ChEBI" id="CHEBI:30616"/>
        <dbReference type="ChEBI" id="CHEBI:43474"/>
        <dbReference type="ChEBI" id="CHEBI:57972"/>
        <dbReference type="ChEBI" id="CHEBI:70757"/>
        <dbReference type="ChEBI" id="CHEBI:83898"/>
        <dbReference type="ChEBI" id="CHEBI:456216"/>
        <dbReference type="EC" id="6.3.2.8"/>
    </reaction>
</comment>
<comment type="pathway">
    <text evidence="1">Cell wall biogenesis; peptidoglycan biosynthesis.</text>
</comment>
<comment type="subcellular location">
    <subcellularLocation>
        <location evidence="1">Cytoplasm</location>
    </subcellularLocation>
</comment>
<comment type="similarity">
    <text evidence="1">Belongs to the MurCDEF family.</text>
</comment>
<organism>
    <name type="scientific">Myxococcus xanthus (strain DK1622)</name>
    <dbReference type="NCBI Taxonomy" id="246197"/>
    <lineage>
        <taxon>Bacteria</taxon>
        <taxon>Pseudomonadati</taxon>
        <taxon>Myxococcota</taxon>
        <taxon>Myxococcia</taxon>
        <taxon>Myxococcales</taxon>
        <taxon>Cystobacterineae</taxon>
        <taxon>Myxococcaceae</taxon>
        <taxon>Myxococcus</taxon>
    </lineage>
</organism>
<name>MURC_MYXXD</name>
<dbReference type="EC" id="6.3.2.8" evidence="1"/>
<dbReference type="EMBL" id="CP000113">
    <property type="protein sequence ID" value="ABF88226.1"/>
    <property type="molecule type" value="Genomic_DNA"/>
</dbReference>
<dbReference type="RefSeq" id="WP_011555557.1">
    <property type="nucleotide sequence ID" value="NC_008095.1"/>
</dbReference>
<dbReference type="SMR" id="Q1D0T1"/>
<dbReference type="STRING" id="246197.MXAN_5603"/>
<dbReference type="EnsemblBacteria" id="ABF88226">
    <property type="protein sequence ID" value="ABF88226"/>
    <property type="gene ID" value="MXAN_5603"/>
</dbReference>
<dbReference type="GeneID" id="41362849"/>
<dbReference type="KEGG" id="mxa:MXAN_5603"/>
<dbReference type="eggNOG" id="COG0773">
    <property type="taxonomic scope" value="Bacteria"/>
</dbReference>
<dbReference type="HOGENOM" id="CLU_028104_2_2_7"/>
<dbReference type="OrthoDB" id="9804126at2"/>
<dbReference type="UniPathway" id="UPA00219"/>
<dbReference type="Proteomes" id="UP000002402">
    <property type="component" value="Chromosome"/>
</dbReference>
<dbReference type="GO" id="GO:0005737">
    <property type="term" value="C:cytoplasm"/>
    <property type="evidence" value="ECO:0007669"/>
    <property type="project" value="UniProtKB-SubCell"/>
</dbReference>
<dbReference type="GO" id="GO:0005524">
    <property type="term" value="F:ATP binding"/>
    <property type="evidence" value="ECO:0007669"/>
    <property type="project" value="UniProtKB-UniRule"/>
</dbReference>
<dbReference type="GO" id="GO:0008763">
    <property type="term" value="F:UDP-N-acetylmuramate-L-alanine ligase activity"/>
    <property type="evidence" value="ECO:0007669"/>
    <property type="project" value="UniProtKB-UniRule"/>
</dbReference>
<dbReference type="GO" id="GO:0051301">
    <property type="term" value="P:cell division"/>
    <property type="evidence" value="ECO:0007669"/>
    <property type="project" value="UniProtKB-KW"/>
</dbReference>
<dbReference type="GO" id="GO:0071555">
    <property type="term" value="P:cell wall organization"/>
    <property type="evidence" value="ECO:0007669"/>
    <property type="project" value="UniProtKB-KW"/>
</dbReference>
<dbReference type="GO" id="GO:0009252">
    <property type="term" value="P:peptidoglycan biosynthetic process"/>
    <property type="evidence" value="ECO:0007669"/>
    <property type="project" value="UniProtKB-UniRule"/>
</dbReference>
<dbReference type="GO" id="GO:0008360">
    <property type="term" value="P:regulation of cell shape"/>
    <property type="evidence" value="ECO:0007669"/>
    <property type="project" value="UniProtKB-KW"/>
</dbReference>
<dbReference type="Gene3D" id="3.90.190.20">
    <property type="entry name" value="Mur ligase, C-terminal domain"/>
    <property type="match status" value="1"/>
</dbReference>
<dbReference type="Gene3D" id="3.40.1190.10">
    <property type="entry name" value="Mur-like, catalytic domain"/>
    <property type="match status" value="1"/>
</dbReference>
<dbReference type="Gene3D" id="3.40.50.720">
    <property type="entry name" value="NAD(P)-binding Rossmann-like Domain"/>
    <property type="match status" value="1"/>
</dbReference>
<dbReference type="HAMAP" id="MF_00046">
    <property type="entry name" value="MurC"/>
    <property type="match status" value="1"/>
</dbReference>
<dbReference type="InterPro" id="IPR036565">
    <property type="entry name" value="Mur-like_cat_sf"/>
</dbReference>
<dbReference type="InterPro" id="IPR004101">
    <property type="entry name" value="Mur_ligase_C"/>
</dbReference>
<dbReference type="InterPro" id="IPR036615">
    <property type="entry name" value="Mur_ligase_C_dom_sf"/>
</dbReference>
<dbReference type="InterPro" id="IPR013221">
    <property type="entry name" value="Mur_ligase_cen"/>
</dbReference>
<dbReference type="InterPro" id="IPR000713">
    <property type="entry name" value="Mur_ligase_N"/>
</dbReference>
<dbReference type="InterPro" id="IPR050061">
    <property type="entry name" value="MurCDEF_pg_biosynth"/>
</dbReference>
<dbReference type="InterPro" id="IPR005758">
    <property type="entry name" value="UDP-N-AcMur_Ala_ligase_MurC"/>
</dbReference>
<dbReference type="NCBIfam" id="TIGR01082">
    <property type="entry name" value="murC"/>
    <property type="match status" value="1"/>
</dbReference>
<dbReference type="PANTHER" id="PTHR43445:SF3">
    <property type="entry name" value="UDP-N-ACETYLMURAMATE--L-ALANINE LIGASE"/>
    <property type="match status" value="1"/>
</dbReference>
<dbReference type="PANTHER" id="PTHR43445">
    <property type="entry name" value="UDP-N-ACETYLMURAMATE--L-ALANINE LIGASE-RELATED"/>
    <property type="match status" value="1"/>
</dbReference>
<dbReference type="Pfam" id="PF01225">
    <property type="entry name" value="Mur_ligase"/>
    <property type="match status" value="1"/>
</dbReference>
<dbReference type="Pfam" id="PF02875">
    <property type="entry name" value="Mur_ligase_C"/>
    <property type="match status" value="1"/>
</dbReference>
<dbReference type="Pfam" id="PF08245">
    <property type="entry name" value="Mur_ligase_M"/>
    <property type="match status" value="1"/>
</dbReference>
<dbReference type="SUPFAM" id="SSF51984">
    <property type="entry name" value="MurCD N-terminal domain"/>
    <property type="match status" value="1"/>
</dbReference>
<dbReference type="SUPFAM" id="SSF53623">
    <property type="entry name" value="MurD-like peptide ligases, catalytic domain"/>
    <property type="match status" value="1"/>
</dbReference>
<dbReference type="SUPFAM" id="SSF53244">
    <property type="entry name" value="MurD-like peptide ligases, peptide-binding domain"/>
    <property type="match status" value="1"/>
</dbReference>
<protein>
    <recommendedName>
        <fullName evidence="1">UDP-N-acetylmuramate--L-alanine ligase</fullName>
        <ecNumber evidence="1">6.3.2.8</ecNumber>
    </recommendedName>
    <alternativeName>
        <fullName evidence="1">UDP-N-acetylmuramoyl-L-alanine synthetase</fullName>
    </alternativeName>
</protein>